<reference key="1">
    <citation type="submission" date="2008-10" db="EMBL/GenBank/DDBJ databases">
        <title>Genome sequence of Bacillus cereus G9842.</title>
        <authorList>
            <person name="Dodson R.J."/>
            <person name="Durkin A.S."/>
            <person name="Rosovitz M.J."/>
            <person name="Rasko D.A."/>
            <person name="Hoffmaster A."/>
            <person name="Ravel J."/>
            <person name="Sutton G."/>
        </authorList>
    </citation>
    <scope>NUCLEOTIDE SEQUENCE [LARGE SCALE GENOMIC DNA]</scope>
    <source>
        <strain>G9842</strain>
    </source>
</reference>
<name>HPR_BACC2</name>
<accession>B7IKC1</accession>
<comment type="function">
    <text evidence="1">Negative regulator of protease production and sporulation.</text>
</comment>
<comment type="subunit">
    <text evidence="1">Homodimer.</text>
</comment>
<dbReference type="EMBL" id="CP001186">
    <property type="protein sequence ID" value="ACK96855.1"/>
    <property type="molecule type" value="Genomic_DNA"/>
</dbReference>
<dbReference type="RefSeq" id="WP_000834924.1">
    <property type="nucleotide sequence ID" value="NC_011772.1"/>
</dbReference>
<dbReference type="SMR" id="B7IKC1"/>
<dbReference type="KEGG" id="bcg:BCG9842_B4223"/>
<dbReference type="HOGENOM" id="CLU_115790_0_0_9"/>
<dbReference type="Proteomes" id="UP000006744">
    <property type="component" value="Chromosome"/>
</dbReference>
<dbReference type="GO" id="GO:0003677">
    <property type="term" value="F:DNA binding"/>
    <property type="evidence" value="ECO:0007669"/>
    <property type="project" value="UniProtKB-UniRule"/>
</dbReference>
<dbReference type="GO" id="GO:0003700">
    <property type="term" value="F:DNA-binding transcription factor activity"/>
    <property type="evidence" value="ECO:0007669"/>
    <property type="project" value="UniProtKB-UniRule"/>
</dbReference>
<dbReference type="GO" id="GO:0045892">
    <property type="term" value="P:negative regulation of DNA-templated transcription"/>
    <property type="evidence" value="ECO:0007669"/>
    <property type="project" value="UniProtKB-UniRule"/>
</dbReference>
<dbReference type="GO" id="GO:0006950">
    <property type="term" value="P:response to stress"/>
    <property type="evidence" value="ECO:0007669"/>
    <property type="project" value="TreeGrafter"/>
</dbReference>
<dbReference type="GO" id="GO:0030435">
    <property type="term" value="P:sporulation resulting in formation of a cellular spore"/>
    <property type="evidence" value="ECO:0007669"/>
    <property type="project" value="UniProtKB-UniRule"/>
</dbReference>
<dbReference type="FunFam" id="1.10.10.10:FF:000194">
    <property type="entry name" value="HTH-type transcriptional regulator Hpr"/>
    <property type="match status" value="1"/>
</dbReference>
<dbReference type="Gene3D" id="1.10.10.10">
    <property type="entry name" value="Winged helix-like DNA-binding domain superfamily/Winged helix DNA-binding domain"/>
    <property type="match status" value="1"/>
</dbReference>
<dbReference type="HAMAP" id="MF_01911">
    <property type="entry name" value="HTH_type_Hpr"/>
    <property type="match status" value="1"/>
</dbReference>
<dbReference type="InterPro" id="IPR000835">
    <property type="entry name" value="HTH_MarR-typ"/>
</dbReference>
<dbReference type="InterPro" id="IPR023488">
    <property type="entry name" value="HTH_tscrpt_reg_Hpr"/>
</dbReference>
<dbReference type="InterPro" id="IPR039422">
    <property type="entry name" value="MarR/SlyA-like"/>
</dbReference>
<dbReference type="InterPro" id="IPR023187">
    <property type="entry name" value="Tscrpt_reg_MarR-type_CS"/>
</dbReference>
<dbReference type="InterPro" id="IPR036388">
    <property type="entry name" value="WH-like_DNA-bd_sf"/>
</dbReference>
<dbReference type="InterPro" id="IPR036390">
    <property type="entry name" value="WH_DNA-bd_sf"/>
</dbReference>
<dbReference type="NCBIfam" id="NF010349">
    <property type="entry name" value="PRK13777.1"/>
    <property type="match status" value="1"/>
</dbReference>
<dbReference type="PANTHER" id="PTHR33164:SF58">
    <property type="entry name" value="DNA-BINDING TRANSCRIPTIONAL REPRESSOR SCOC"/>
    <property type="match status" value="1"/>
</dbReference>
<dbReference type="PANTHER" id="PTHR33164">
    <property type="entry name" value="TRANSCRIPTIONAL REGULATOR, MARR FAMILY"/>
    <property type="match status" value="1"/>
</dbReference>
<dbReference type="Pfam" id="PF01047">
    <property type="entry name" value="MarR"/>
    <property type="match status" value="1"/>
</dbReference>
<dbReference type="SMART" id="SM00347">
    <property type="entry name" value="HTH_MARR"/>
    <property type="match status" value="1"/>
</dbReference>
<dbReference type="SUPFAM" id="SSF46785">
    <property type="entry name" value="Winged helix' DNA-binding domain"/>
    <property type="match status" value="1"/>
</dbReference>
<dbReference type="PROSITE" id="PS01117">
    <property type="entry name" value="HTH_MARR_1"/>
    <property type="match status" value="1"/>
</dbReference>
<dbReference type="PROSITE" id="PS50995">
    <property type="entry name" value="HTH_MARR_2"/>
    <property type="match status" value="1"/>
</dbReference>
<sequence length="185" mass="21730">MKSGEKDYSVKEAMIFSQRIAQLSKALWKCVEKDWQQWIKPYDLNINEHHILTIAYHLKGASISEIAKFGVMHVSTAFNFSKKLEERGYLVFSKKEDDKRNTYIEITDKGEELLLRLMEEYDPENNSVFNGALALRNFYGKFPENIELIAILRNIYGQDFIDIFEKSLEDIEENFTESDQKLVKK</sequence>
<gene>
    <name evidence="1" type="primary">hpr</name>
    <name type="ordered locus">BCG9842_B4223</name>
</gene>
<evidence type="ECO:0000255" key="1">
    <source>
        <dbReference type="HAMAP-Rule" id="MF_01911"/>
    </source>
</evidence>
<keyword id="KW-0238">DNA-binding</keyword>
<keyword id="KW-0678">Repressor</keyword>
<keyword id="KW-0749">Sporulation</keyword>
<keyword id="KW-0804">Transcription</keyword>
<keyword id="KW-0805">Transcription regulation</keyword>
<organism>
    <name type="scientific">Bacillus cereus (strain G9842)</name>
    <dbReference type="NCBI Taxonomy" id="405531"/>
    <lineage>
        <taxon>Bacteria</taxon>
        <taxon>Bacillati</taxon>
        <taxon>Bacillota</taxon>
        <taxon>Bacilli</taxon>
        <taxon>Bacillales</taxon>
        <taxon>Bacillaceae</taxon>
        <taxon>Bacillus</taxon>
        <taxon>Bacillus cereus group</taxon>
    </lineage>
</organism>
<proteinExistence type="inferred from homology"/>
<feature type="chain" id="PRO_1000188792" description="HTH-type transcriptional regulator Hpr">
    <location>
        <begin position="1"/>
        <end position="185"/>
    </location>
</feature>
<feature type="domain" description="HTH marR-type" evidence="1">
    <location>
        <begin position="13"/>
        <end position="157"/>
    </location>
</feature>
<feature type="DNA-binding region" description="H-T-H motif" evidence="1">
    <location>
        <begin position="63"/>
        <end position="86"/>
    </location>
</feature>
<protein>
    <recommendedName>
        <fullName evidence="1">HTH-type transcriptional regulator Hpr</fullName>
    </recommendedName>
    <alternativeName>
        <fullName evidence="1">Protease production regulatory protein Hpr</fullName>
    </alternativeName>
</protein>